<keyword id="KW-0007">Acetylation</keyword>
<keyword id="KW-0903">Direct protein sequencing</keyword>
<keyword id="KW-0349">Heme</keyword>
<keyword id="KW-0408">Iron</keyword>
<keyword id="KW-0479">Metal-binding</keyword>
<keyword id="KW-0561">Oxygen transport</keyword>
<keyword id="KW-0597">Phosphoprotein</keyword>
<keyword id="KW-0702">S-nitrosylation</keyword>
<keyword id="KW-0813">Transport</keyword>
<protein>
    <recommendedName>
        <fullName>Hemoglobin subunit beta</fullName>
    </recommendedName>
    <alternativeName>
        <fullName>Beta-globin</fullName>
    </alternativeName>
    <alternativeName>
        <fullName>Hemoglobin beta chain</fullName>
    </alternativeName>
</protein>
<proteinExistence type="evidence at protein level"/>
<evidence type="ECO:0000250" key="1">
    <source>
        <dbReference type="UniProtKB" id="P02086"/>
    </source>
</evidence>
<evidence type="ECO:0000250" key="2">
    <source>
        <dbReference type="UniProtKB" id="P68871"/>
    </source>
</evidence>
<evidence type="ECO:0000255" key="3">
    <source>
        <dbReference type="PROSITE-ProRule" id="PRU00238"/>
    </source>
</evidence>
<name>HBB_URSTH</name>
<feature type="chain" id="PRO_0000053149" description="Hemoglobin subunit beta">
    <location>
        <begin position="1"/>
        <end position="146"/>
    </location>
</feature>
<feature type="domain" description="Globin" evidence="3">
    <location>
        <begin position="2"/>
        <end position="146"/>
    </location>
</feature>
<feature type="binding site" description="distal binding residue">
    <location>
        <position position="63"/>
    </location>
    <ligand>
        <name>heme b</name>
        <dbReference type="ChEBI" id="CHEBI:60344"/>
    </ligand>
    <ligandPart>
        <name>Fe</name>
        <dbReference type="ChEBI" id="CHEBI:18248"/>
    </ligandPart>
</feature>
<feature type="binding site" description="proximal binding residue">
    <location>
        <position position="92"/>
    </location>
    <ligand>
        <name>heme b</name>
        <dbReference type="ChEBI" id="CHEBI:60344"/>
    </ligand>
    <ligandPart>
        <name>Fe</name>
        <dbReference type="ChEBI" id="CHEBI:18248"/>
    </ligandPart>
</feature>
<feature type="modified residue" description="N-acetylvaline" evidence="1">
    <location>
        <position position="1"/>
    </location>
</feature>
<feature type="modified residue" description="Phosphothreonine" evidence="2">
    <location>
        <position position="12"/>
    </location>
</feature>
<feature type="modified residue" description="Phosphoserine" evidence="2">
    <location>
        <position position="44"/>
    </location>
</feature>
<feature type="modified residue" description="N6-acetyllysine" evidence="2">
    <location>
        <position position="59"/>
    </location>
</feature>
<feature type="modified residue" description="N6-acetyllysine" evidence="2">
    <location>
        <position position="82"/>
    </location>
</feature>
<feature type="modified residue" description="S-nitrosocysteine" evidence="2">
    <location>
        <position position="93"/>
    </location>
</feature>
<feature type="modified residue" description="N6-acetyllysine" evidence="2">
    <location>
        <position position="144"/>
    </location>
</feature>
<reference key="1">
    <citation type="journal article" date="1986" name="Biol. Chem. Hoppe-Seyler">
        <title>Primary structure of hemoglobin of the polar bear (Ursus maritimus, Carnivora) and the Asiatic black bear (Ursus tibetanus, Carnivora).</title>
        <authorList>
            <person name="Hofmann O."/>
            <person name="Schreitmuller T."/>
            <person name="Braunitzer G."/>
            <person name="Wiesner M.V.H."/>
        </authorList>
    </citation>
    <scope>PROTEIN SEQUENCE</scope>
</reference>
<dbReference type="PIR" id="A90709">
    <property type="entry name" value="HBBRT"/>
</dbReference>
<dbReference type="SMR" id="P68012"/>
<dbReference type="GO" id="GO:0072562">
    <property type="term" value="C:blood microparticle"/>
    <property type="evidence" value="ECO:0007669"/>
    <property type="project" value="TreeGrafter"/>
</dbReference>
<dbReference type="GO" id="GO:0031838">
    <property type="term" value="C:haptoglobin-hemoglobin complex"/>
    <property type="evidence" value="ECO:0007669"/>
    <property type="project" value="TreeGrafter"/>
</dbReference>
<dbReference type="GO" id="GO:0005833">
    <property type="term" value="C:hemoglobin complex"/>
    <property type="evidence" value="ECO:0007669"/>
    <property type="project" value="InterPro"/>
</dbReference>
<dbReference type="GO" id="GO:0031720">
    <property type="term" value="F:haptoglobin binding"/>
    <property type="evidence" value="ECO:0007669"/>
    <property type="project" value="TreeGrafter"/>
</dbReference>
<dbReference type="GO" id="GO:0020037">
    <property type="term" value="F:heme binding"/>
    <property type="evidence" value="ECO:0007669"/>
    <property type="project" value="InterPro"/>
</dbReference>
<dbReference type="GO" id="GO:0031721">
    <property type="term" value="F:hemoglobin alpha binding"/>
    <property type="evidence" value="ECO:0007669"/>
    <property type="project" value="TreeGrafter"/>
</dbReference>
<dbReference type="GO" id="GO:0046872">
    <property type="term" value="F:metal ion binding"/>
    <property type="evidence" value="ECO:0007669"/>
    <property type="project" value="UniProtKB-KW"/>
</dbReference>
<dbReference type="GO" id="GO:0043177">
    <property type="term" value="F:organic acid binding"/>
    <property type="evidence" value="ECO:0007669"/>
    <property type="project" value="TreeGrafter"/>
</dbReference>
<dbReference type="GO" id="GO:0019825">
    <property type="term" value="F:oxygen binding"/>
    <property type="evidence" value="ECO:0007669"/>
    <property type="project" value="InterPro"/>
</dbReference>
<dbReference type="GO" id="GO:0005344">
    <property type="term" value="F:oxygen carrier activity"/>
    <property type="evidence" value="ECO:0007669"/>
    <property type="project" value="UniProtKB-KW"/>
</dbReference>
<dbReference type="GO" id="GO:0004601">
    <property type="term" value="F:peroxidase activity"/>
    <property type="evidence" value="ECO:0007669"/>
    <property type="project" value="TreeGrafter"/>
</dbReference>
<dbReference type="GO" id="GO:0042744">
    <property type="term" value="P:hydrogen peroxide catabolic process"/>
    <property type="evidence" value="ECO:0007669"/>
    <property type="project" value="TreeGrafter"/>
</dbReference>
<dbReference type="CDD" id="cd08925">
    <property type="entry name" value="Hb-beta-like"/>
    <property type="match status" value="1"/>
</dbReference>
<dbReference type="FunFam" id="1.10.490.10:FF:000001">
    <property type="entry name" value="Hemoglobin subunit beta"/>
    <property type="match status" value="1"/>
</dbReference>
<dbReference type="Gene3D" id="1.10.490.10">
    <property type="entry name" value="Globins"/>
    <property type="match status" value="1"/>
</dbReference>
<dbReference type="InterPro" id="IPR000971">
    <property type="entry name" value="Globin"/>
</dbReference>
<dbReference type="InterPro" id="IPR009050">
    <property type="entry name" value="Globin-like_sf"/>
</dbReference>
<dbReference type="InterPro" id="IPR012292">
    <property type="entry name" value="Globin/Proto"/>
</dbReference>
<dbReference type="InterPro" id="IPR002337">
    <property type="entry name" value="Hemoglobin_b"/>
</dbReference>
<dbReference type="InterPro" id="IPR050056">
    <property type="entry name" value="Hemoglobin_oxygen_transport"/>
</dbReference>
<dbReference type="PANTHER" id="PTHR11442">
    <property type="entry name" value="HEMOGLOBIN FAMILY MEMBER"/>
    <property type="match status" value="1"/>
</dbReference>
<dbReference type="PANTHER" id="PTHR11442:SF42">
    <property type="entry name" value="HEMOGLOBIN SUBUNIT BETA"/>
    <property type="match status" value="1"/>
</dbReference>
<dbReference type="Pfam" id="PF00042">
    <property type="entry name" value="Globin"/>
    <property type="match status" value="1"/>
</dbReference>
<dbReference type="PRINTS" id="PR00814">
    <property type="entry name" value="BETAHAEM"/>
</dbReference>
<dbReference type="SUPFAM" id="SSF46458">
    <property type="entry name" value="Globin-like"/>
    <property type="match status" value="1"/>
</dbReference>
<dbReference type="PROSITE" id="PS01033">
    <property type="entry name" value="GLOBIN"/>
    <property type="match status" value="1"/>
</dbReference>
<accession>P68012</accession>
<accession>P07422</accession>
<sequence length="146" mass="16009">VHLTGEEKSLVTGLWGKVNVDEVGGEALGRLLVVYPWTQRFFDSFGDLSSADAIMNNPKVKAHGKKVLNSFSDGLKNLDNLKGTFAKLSELHCDKLHVDPENFKLLGNVLVCVLAHHFGKEFTPQVQAAYQKVVAGVANALAHKYH</sequence>
<gene>
    <name type="primary">HBB</name>
</gene>
<comment type="function">
    <text>Involved in oxygen transport from the lung to the various peripheral tissues.</text>
</comment>
<comment type="subunit">
    <text>Heterotetramer of two alpha chains and two beta chains.</text>
</comment>
<comment type="tissue specificity">
    <text>Red blood cells.</text>
</comment>
<comment type="similarity">
    <text evidence="3">Belongs to the globin family.</text>
</comment>
<organism>
    <name type="scientific">Ursus thibetanus</name>
    <name type="common">Asiatic black bear</name>
    <name type="synonym">Selenarctos thibetanus</name>
    <dbReference type="NCBI Taxonomy" id="9642"/>
    <lineage>
        <taxon>Eukaryota</taxon>
        <taxon>Metazoa</taxon>
        <taxon>Chordata</taxon>
        <taxon>Craniata</taxon>
        <taxon>Vertebrata</taxon>
        <taxon>Euteleostomi</taxon>
        <taxon>Mammalia</taxon>
        <taxon>Eutheria</taxon>
        <taxon>Laurasiatheria</taxon>
        <taxon>Carnivora</taxon>
        <taxon>Caniformia</taxon>
        <taxon>Ursidae</taxon>
        <taxon>Ursus</taxon>
    </lineage>
</organism>